<organism>
    <name type="scientific">Escherichia coli (strain SMS-3-5 / SECEC)</name>
    <dbReference type="NCBI Taxonomy" id="439855"/>
    <lineage>
        <taxon>Bacteria</taxon>
        <taxon>Pseudomonadati</taxon>
        <taxon>Pseudomonadota</taxon>
        <taxon>Gammaproteobacteria</taxon>
        <taxon>Enterobacterales</taxon>
        <taxon>Enterobacteriaceae</taxon>
        <taxon>Escherichia</taxon>
    </lineage>
</organism>
<feature type="chain" id="PRO_1000193449" description="Soluble pyridine nucleotide transhydrogenase">
    <location>
        <begin position="1"/>
        <end position="466"/>
    </location>
</feature>
<feature type="binding site" evidence="1">
    <location>
        <begin position="36"/>
        <end position="45"/>
    </location>
    <ligand>
        <name>FAD</name>
        <dbReference type="ChEBI" id="CHEBI:57692"/>
    </ligand>
</feature>
<proteinExistence type="inferred from homology"/>
<evidence type="ECO:0000255" key="1">
    <source>
        <dbReference type="HAMAP-Rule" id="MF_00247"/>
    </source>
</evidence>
<comment type="function">
    <text evidence="1">Conversion of NADPH, generated by peripheral catabolic pathways, to NADH, which can enter the respiratory chain for energy generation.</text>
</comment>
<comment type="catalytic activity">
    <reaction evidence="1">
        <text>NAD(+) + NADPH = NADH + NADP(+)</text>
        <dbReference type="Rhea" id="RHEA:11692"/>
        <dbReference type="ChEBI" id="CHEBI:57540"/>
        <dbReference type="ChEBI" id="CHEBI:57783"/>
        <dbReference type="ChEBI" id="CHEBI:57945"/>
        <dbReference type="ChEBI" id="CHEBI:58349"/>
        <dbReference type="EC" id="1.6.1.1"/>
    </reaction>
</comment>
<comment type="cofactor">
    <cofactor evidence="1">
        <name>FAD</name>
        <dbReference type="ChEBI" id="CHEBI:57692"/>
    </cofactor>
    <text evidence="1">Binds 1 FAD per subunit.</text>
</comment>
<comment type="subcellular location">
    <subcellularLocation>
        <location evidence="1">Cytoplasm</location>
    </subcellularLocation>
</comment>
<comment type="similarity">
    <text evidence="1">Belongs to the class-I pyridine nucleotide-disulfide oxidoreductase family.</text>
</comment>
<accession>B1LNS2</accession>
<keyword id="KW-0963">Cytoplasm</keyword>
<keyword id="KW-0274">FAD</keyword>
<keyword id="KW-0285">Flavoprotein</keyword>
<keyword id="KW-0520">NAD</keyword>
<keyword id="KW-0521">NADP</keyword>
<keyword id="KW-0560">Oxidoreductase</keyword>
<protein>
    <recommendedName>
        <fullName evidence="1">Soluble pyridine nucleotide transhydrogenase</fullName>
        <shortName evidence="1">STH</shortName>
        <ecNumber evidence="1">1.6.1.1</ecNumber>
    </recommendedName>
    <alternativeName>
        <fullName evidence="1">NAD(P)(+) transhydrogenase [B-specific]</fullName>
    </alternativeName>
</protein>
<reference key="1">
    <citation type="journal article" date="2008" name="J. Bacteriol.">
        <title>Insights into the environmental resistance gene pool from the genome sequence of the multidrug-resistant environmental isolate Escherichia coli SMS-3-5.</title>
        <authorList>
            <person name="Fricke W.F."/>
            <person name="Wright M.S."/>
            <person name="Lindell A.H."/>
            <person name="Harkins D.M."/>
            <person name="Baker-Austin C."/>
            <person name="Ravel J."/>
            <person name="Stepanauskas R."/>
        </authorList>
    </citation>
    <scope>NUCLEOTIDE SEQUENCE [LARGE SCALE GENOMIC DNA]</scope>
    <source>
        <strain>SMS-3-5 / SECEC</strain>
    </source>
</reference>
<gene>
    <name evidence="1" type="primary">sthA</name>
    <name evidence="1" type="synonym">udhA</name>
    <name type="ordered locus">EcSMS35_4408</name>
</gene>
<dbReference type="EC" id="1.6.1.1" evidence="1"/>
<dbReference type="EMBL" id="CP000970">
    <property type="protein sequence ID" value="ACB16911.1"/>
    <property type="molecule type" value="Genomic_DNA"/>
</dbReference>
<dbReference type="RefSeq" id="WP_001120806.1">
    <property type="nucleotide sequence ID" value="NC_010498.1"/>
</dbReference>
<dbReference type="SMR" id="B1LNS2"/>
<dbReference type="KEGG" id="ecm:EcSMS35_4408"/>
<dbReference type="HOGENOM" id="CLU_016755_0_0_6"/>
<dbReference type="Proteomes" id="UP000007011">
    <property type="component" value="Chromosome"/>
</dbReference>
<dbReference type="GO" id="GO:0005829">
    <property type="term" value="C:cytosol"/>
    <property type="evidence" value="ECO:0007669"/>
    <property type="project" value="TreeGrafter"/>
</dbReference>
<dbReference type="GO" id="GO:0004148">
    <property type="term" value="F:dihydrolipoyl dehydrogenase (NADH) activity"/>
    <property type="evidence" value="ECO:0007669"/>
    <property type="project" value="TreeGrafter"/>
</dbReference>
<dbReference type="GO" id="GO:0050660">
    <property type="term" value="F:flavin adenine dinucleotide binding"/>
    <property type="evidence" value="ECO:0007669"/>
    <property type="project" value="TreeGrafter"/>
</dbReference>
<dbReference type="GO" id="GO:0003957">
    <property type="term" value="F:NAD(P)+ transhydrogenase (Si-specific) activity"/>
    <property type="evidence" value="ECO:0007669"/>
    <property type="project" value="UniProtKB-UniRule"/>
</dbReference>
<dbReference type="GO" id="GO:0006103">
    <property type="term" value="P:2-oxoglutarate metabolic process"/>
    <property type="evidence" value="ECO:0007669"/>
    <property type="project" value="TreeGrafter"/>
</dbReference>
<dbReference type="GO" id="GO:0006739">
    <property type="term" value="P:NADP metabolic process"/>
    <property type="evidence" value="ECO:0007669"/>
    <property type="project" value="UniProtKB-UniRule"/>
</dbReference>
<dbReference type="FunFam" id="3.30.390.30:FF:000002">
    <property type="entry name" value="Soluble pyridine nucleotide transhydrogenase"/>
    <property type="match status" value="1"/>
</dbReference>
<dbReference type="FunFam" id="3.50.50.60:FF:000008">
    <property type="entry name" value="Soluble pyridine nucleotide transhydrogenase"/>
    <property type="match status" value="1"/>
</dbReference>
<dbReference type="Gene3D" id="3.30.390.30">
    <property type="match status" value="1"/>
</dbReference>
<dbReference type="Gene3D" id="3.50.50.60">
    <property type="entry name" value="FAD/NAD(P)-binding domain"/>
    <property type="match status" value="2"/>
</dbReference>
<dbReference type="HAMAP" id="MF_00247">
    <property type="entry name" value="SthA"/>
    <property type="match status" value="1"/>
</dbReference>
<dbReference type="InterPro" id="IPR050151">
    <property type="entry name" value="Class-I_Pyr_Nuc-Dis_Oxidored"/>
</dbReference>
<dbReference type="InterPro" id="IPR036188">
    <property type="entry name" value="FAD/NAD-bd_sf"/>
</dbReference>
<dbReference type="InterPro" id="IPR023753">
    <property type="entry name" value="FAD/NAD-binding_dom"/>
</dbReference>
<dbReference type="InterPro" id="IPR016156">
    <property type="entry name" value="FAD/NAD-linked_Rdtase_dimer_sf"/>
</dbReference>
<dbReference type="InterPro" id="IPR001100">
    <property type="entry name" value="Pyr_nuc-diS_OxRdtase"/>
</dbReference>
<dbReference type="InterPro" id="IPR004099">
    <property type="entry name" value="Pyr_nucl-diS_OxRdtase_dimer"/>
</dbReference>
<dbReference type="InterPro" id="IPR022962">
    <property type="entry name" value="STH_gammaproteobact"/>
</dbReference>
<dbReference type="NCBIfam" id="NF003585">
    <property type="entry name" value="PRK05249.1"/>
    <property type="match status" value="1"/>
</dbReference>
<dbReference type="PANTHER" id="PTHR22912">
    <property type="entry name" value="DISULFIDE OXIDOREDUCTASE"/>
    <property type="match status" value="1"/>
</dbReference>
<dbReference type="PANTHER" id="PTHR22912:SF93">
    <property type="entry name" value="SOLUBLE PYRIDINE NUCLEOTIDE TRANSHYDROGENASE"/>
    <property type="match status" value="1"/>
</dbReference>
<dbReference type="Pfam" id="PF07992">
    <property type="entry name" value="Pyr_redox_2"/>
    <property type="match status" value="1"/>
</dbReference>
<dbReference type="Pfam" id="PF02852">
    <property type="entry name" value="Pyr_redox_dim"/>
    <property type="match status" value="1"/>
</dbReference>
<dbReference type="PIRSF" id="PIRSF000350">
    <property type="entry name" value="Mercury_reductase_MerA"/>
    <property type="match status" value="1"/>
</dbReference>
<dbReference type="PRINTS" id="PR00368">
    <property type="entry name" value="FADPNR"/>
</dbReference>
<dbReference type="PRINTS" id="PR00411">
    <property type="entry name" value="PNDRDTASEI"/>
</dbReference>
<dbReference type="SUPFAM" id="SSF51905">
    <property type="entry name" value="FAD/NAD(P)-binding domain"/>
    <property type="match status" value="1"/>
</dbReference>
<dbReference type="SUPFAM" id="SSF55424">
    <property type="entry name" value="FAD/NAD-linked reductases, dimerisation (C-terminal) domain"/>
    <property type="match status" value="1"/>
</dbReference>
<name>STHA_ECOSM</name>
<sequence>MPHSYDYDAIVIGSGPGGEGAAMGLVKQGARVAVIERYQNVGGGCTHWGTIPSKALRHAVSRIIEFNQNPLYSDHSRLLRSSFADILNHADNVINQQTRMRQGFYERNHCEILQGNARFVDEHTLALDCPDGSVETLTAEKFVIACGSRPYHPTDVDFTHPRIYDSDSILSMHHEPRHVLIYGAGVIGCEYASIFRGMDVKVDLINTRDRLLAFLDQEMSDSLSYHFWNSGVVIRHNEEYEKIEGCDDGVIMHLKSGKKLKADCLLYANGRTGNTDSLALQNIGLETDSRGQLKVNSMYQTAQPHVYAVGDVIGYPSLASAAYDQGRIAAQALVKGEANAHLIEDIPTGIYTIPEISSVGKTEQQLTAMKVPYEVGRAQFKHLARAQIVGMNVGTLKILFHRETKEILGIHCFGERAAEIIHIGQAIMEQKGGGNTIEYFVNTTFNYPTMAEAYRVAALNGLNRLF</sequence>